<accession>F1R520</accession>
<accession>A0A8M3ANN9</accession>
<accession>A0A8M3B657</accession>
<accession>A0A8N7UYF5</accession>
<accession>E7EYL3</accession>
<accession>E9QIY1</accession>
<reference key="1">
    <citation type="journal article" date="2013" name="Nature">
        <title>The zebrafish reference genome sequence and its relationship to the human genome.</title>
        <authorList>
            <person name="Howe K."/>
            <person name="Clark M.D."/>
            <person name="Torroja C.F."/>
            <person name="Torrance J."/>
            <person name="Berthelot C."/>
            <person name="Muffato M."/>
            <person name="Collins J.E."/>
            <person name="Humphray S."/>
            <person name="McLaren K."/>
            <person name="Matthews L."/>
            <person name="McLaren S."/>
            <person name="Sealy I."/>
            <person name="Caccamo M."/>
            <person name="Churcher C."/>
            <person name="Scott C."/>
            <person name="Barrett J.C."/>
            <person name="Koch R."/>
            <person name="Rauch G.J."/>
            <person name="White S."/>
            <person name="Chow W."/>
            <person name="Kilian B."/>
            <person name="Quintais L.T."/>
            <person name="Guerra-Assuncao J.A."/>
            <person name="Zhou Y."/>
            <person name="Gu Y."/>
            <person name="Yen J."/>
            <person name="Vogel J.H."/>
            <person name="Eyre T."/>
            <person name="Redmond S."/>
            <person name="Banerjee R."/>
            <person name="Chi J."/>
            <person name="Fu B."/>
            <person name="Langley E."/>
            <person name="Maguire S.F."/>
            <person name="Laird G.K."/>
            <person name="Lloyd D."/>
            <person name="Kenyon E."/>
            <person name="Donaldson S."/>
            <person name="Sehra H."/>
            <person name="Almeida-King J."/>
            <person name="Loveland J."/>
            <person name="Trevanion S."/>
            <person name="Jones M."/>
            <person name="Quail M."/>
            <person name="Willey D."/>
            <person name="Hunt A."/>
            <person name="Burton J."/>
            <person name="Sims S."/>
            <person name="McLay K."/>
            <person name="Plumb B."/>
            <person name="Davis J."/>
            <person name="Clee C."/>
            <person name="Oliver K."/>
            <person name="Clark R."/>
            <person name="Riddle C."/>
            <person name="Elliot D."/>
            <person name="Threadgold G."/>
            <person name="Harden G."/>
            <person name="Ware D."/>
            <person name="Begum S."/>
            <person name="Mortimore B."/>
            <person name="Kerry G."/>
            <person name="Heath P."/>
            <person name="Phillimore B."/>
            <person name="Tracey A."/>
            <person name="Corby N."/>
            <person name="Dunn M."/>
            <person name="Johnson C."/>
            <person name="Wood J."/>
            <person name="Clark S."/>
            <person name="Pelan S."/>
            <person name="Griffiths G."/>
            <person name="Smith M."/>
            <person name="Glithero R."/>
            <person name="Howden P."/>
            <person name="Barker N."/>
            <person name="Lloyd C."/>
            <person name="Stevens C."/>
            <person name="Harley J."/>
            <person name="Holt K."/>
            <person name="Panagiotidis G."/>
            <person name="Lovell J."/>
            <person name="Beasley H."/>
            <person name="Henderson C."/>
            <person name="Gordon D."/>
            <person name="Auger K."/>
            <person name="Wright D."/>
            <person name="Collins J."/>
            <person name="Raisen C."/>
            <person name="Dyer L."/>
            <person name="Leung K."/>
            <person name="Robertson L."/>
            <person name="Ambridge K."/>
            <person name="Leongamornlert D."/>
            <person name="McGuire S."/>
            <person name="Gilderthorp R."/>
            <person name="Griffiths C."/>
            <person name="Manthravadi D."/>
            <person name="Nichol S."/>
            <person name="Barker G."/>
            <person name="Whitehead S."/>
            <person name="Kay M."/>
            <person name="Brown J."/>
            <person name="Murnane C."/>
            <person name="Gray E."/>
            <person name="Humphries M."/>
            <person name="Sycamore N."/>
            <person name="Barker D."/>
            <person name="Saunders D."/>
            <person name="Wallis J."/>
            <person name="Babbage A."/>
            <person name="Hammond S."/>
            <person name="Mashreghi-Mohammadi M."/>
            <person name="Barr L."/>
            <person name="Martin S."/>
            <person name="Wray P."/>
            <person name="Ellington A."/>
            <person name="Matthews N."/>
            <person name="Ellwood M."/>
            <person name="Woodmansey R."/>
            <person name="Clark G."/>
            <person name="Cooper J."/>
            <person name="Tromans A."/>
            <person name="Grafham D."/>
            <person name="Skuce C."/>
            <person name="Pandian R."/>
            <person name="Andrews R."/>
            <person name="Harrison E."/>
            <person name="Kimberley A."/>
            <person name="Garnett J."/>
            <person name="Fosker N."/>
            <person name="Hall R."/>
            <person name="Garner P."/>
            <person name="Kelly D."/>
            <person name="Bird C."/>
            <person name="Palmer S."/>
            <person name="Gehring I."/>
            <person name="Berger A."/>
            <person name="Dooley C.M."/>
            <person name="Ersan-Urun Z."/>
            <person name="Eser C."/>
            <person name="Geiger H."/>
            <person name="Geisler M."/>
            <person name="Karotki L."/>
            <person name="Kirn A."/>
            <person name="Konantz J."/>
            <person name="Konantz M."/>
            <person name="Oberlander M."/>
            <person name="Rudolph-Geiger S."/>
            <person name="Teucke M."/>
            <person name="Lanz C."/>
            <person name="Raddatz G."/>
            <person name="Osoegawa K."/>
            <person name="Zhu B."/>
            <person name="Rapp A."/>
            <person name="Widaa S."/>
            <person name="Langford C."/>
            <person name="Yang F."/>
            <person name="Schuster S.C."/>
            <person name="Carter N.P."/>
            <person name="Harrow J."/>
            <person name="Ning Z."/>
            <person name="Herrero J."/>
            <person name="Searle S.M."/>
            <person name="Enright A."/>
            <person name="Geisler R."/>
            <person name="Plasterk R.H."/>
            <person name="Lee C."/>
            <person name="Westerfield M."/>
            <person name="de Jong P.J."/>
            <person name="Zon L.I."/>
            <person name="Postlethwait J.H."/>
            <person name="Nusslein-Volhard C."/>
            <person name="Hubbard T.J."/>
            <person name="Roest Crollius H."/>
            <person name="Rogers J."/>
            <person name="Stemple D.L."/>
        </authorList>
    </citation>
    <scope>NUCLEOTIDE SEQUENCE [LARGE SCALE GENOMIC DNA]</scope>
    <source>
        <strain>Tuebingen</strain>
    </source>
</reference>
<reference key="2">
    <citation type="submission" date="2006-11" db="EMBL/GenBank/DDBJ databases">
        <authorList>
            <consortium name="NIH - Zebrafish Gene Collection (ZGC) project"/>
        </authorList>
    </citation>
    <scope>NUCLEOTIDE SEQUENCE [LARGE SCALE MRNA]</scope>
    <source>
        <tissue>Olfactory epithelium</tissue>
    </source>
</reference>
<reference key="3">
    <citation type="journal article" date="2014" name="J. Neurosci.">
        <title>Calsyntenin-1 regulates axon branching and endosomal trafficking during sensory neuron development in vivo.</title>
        <authorList>
            <person name="Ponomareva O.Y."/>
            <person name="Holmen I.C."/>
            <person name="Sperry A.J."/>
            <person name="Eliceiri K.W."/>
            <person name="Halloran M.C."/>
        </authorList>
    </citation>
    <scope>FUNCTION</scope>
    <scope>TISSUE SPECIFICITY</scope>
</reference>
<reference key="4">
    <citation type="journal article" date="2015" name="Neuroscience">
        <title>Zebrafish calsyntenins mediate homophilic adhesion through their amino-terminal cadherin repeats.</title>
        <authorList>
            <person name="Ortiz-Medina H."/>
            <person name="Emond M.R."/>
            <person name="Jontes J.D."/>
        </authorList>
    </citation>
    <scope>FUNCTION</scope>
    <scope>SUBUNIT</scope>
    <scope>TISSUE SPECIFICITY</scope>
    <scope>DEVELOPMENTAL STAGE</scope>
</reference>
<proteinExistence type="evidence at protein level"/>
<feature type="signal peptide" evidence="3">
    <location>
        <begin position="1"/>
        <end position="25"/>
    </location>
</feature>
<feature type="chain" id="PRO_5035036261" description="Calsyntenin-1" evidence="3">
    <location>
        <begin position="26"/>
        <end position="954"/>
    </location>
</feature>
<feature type="topological domain" description="Extracellular" evidence="10">
    <location>
        <begin position="26"/>
        <end position="833"/>
    </location>
</feature>
<feature type="transmembrane region" description="Helical" evidence="3">
    <location>
        <begin position="834"/>
        <end position="854"/>
    </location>
</feature>
<feature type="topological domain" description="Cytoplasmic" evidence="10">
    <location>
        <begin position="855"/>
        <end position="954"/>
    </location>
</feature>
<feature type="domain" description="Cadherin 1" evidence="4">
    <location>
        <begin position="35"/>
        <end position="151"/>
    </location>
</feature>
<feature type="domain" description="Cadherin 2" evidence="4">
    <location>
        <begin position="152"/>
        <end position="252"/>
    </location>
</feature>
<feature type="region of interest" description="Disordered" evidence="6">
    <location>
        <begin position="891"/>
        <end position="954"/>
    </location>
</feature>
<feature type="compositionally biased region" description="Acidic residues" evidence="6">
    <location>
        <begin position="900"/>
        <end position="935"/>
    </location>
</feature>
<feature type="glycosylation site" description="N-linked (GlcNAc...) asparagine" evidence="5">
    <location>
        <position position="333"/>
    </location>
</feature>
<feature type="glycosylation site" description="N-linked (GlcNAc...) asparagine" evidence="5">
    <location>
        <position position="353"/>
    </location>
</feature>
<feature type="glycosylation site" description="N-linked (GlcNAc...) asparagine" evidence="5">
    <location>
        <position position="552"/>
    </location>
</feature>
<feature type="splice variant" id="VSP_061884" description="In isoform 3.">
    <original>A</original>
    <variation>AESFEVTFTKE</variation>
    <location>
        <position position="68"/>
    </location>
</feature>
<feature type="splice variant" id="VSP_061885" description="In isoform 2.">
    <original>Q</original>
    <variation>QDFSGHDNDTETLSEPLT</variation>
    <location>
        <position position="493"/>
    </location>
</feature>
<feature type="sequence conflict" description="In Ref. 2; AAI27397." evidence="10" ref="2">
    <original>D</original>
    <variation>E</variation>
    <location>
        <position position="24"/>
    </location>
</feature>
<feature type="sequence conflict" description="In Ref. 2; AAI27397." evidence="10" ref="2">
    <original>N</original>
    <variation>D</variation>
    <location>
        <position position="80"/>
    </location>
</feature>
<feature type="sequence conflict" description="In Ref. 2; AAI27397." evidence="10" ref="2">
    <original>W</original>
    <variation>R</variation>
    <location>
        <position position="378"/>
    </location>
</feature>
<feature type="sequence conflict" description="In Ref. 2; AAI27397." evidence="10" ref="2">
    <original>L</original>
    <variation>P</variation>
    <location>
        <position position="650"/>
    </location>
</feature>
<evidence type="ECO:0000250" key="1">
    <source>
        <dbReference type="UniProtKB" id="Q99JH7"/>
    </source>
</evidence>
<evidence type="ECO:0000250" key="2">
    <source>
        <dbReference type="UniProtKB" id="Q9EPL2"/>
    </source>
</evidence>
<evidence type="ECO:0000255" key="3"/>
<evidence type="ECO:0000255" key="4">
    <source>
        <dbReference type="PROSITE-ProRule" id="PRU00043"/>
    </source>
</evidence>
<evidence type="ECO:0000255" key="5">
    <source>
        <dbReference type="PROSITE-ProRule" id="PRU00498"/>
    </source>
</evidence>
<evidence type="ECO:0000256" key="6">
    <source>
        <dbReference type="SAM" id="MobiDB-lite"/>
    </source>
</evidence>
<evidence type="ECO:0000269" key="7">
    <source>
    </source>
</evidence>
<evidence type="ECO:0000269" key="8">
    <source>
    </source>
</evidence>
<evidence type="ECO:0000303" key="9">
    <source>
    </source>
</evidence>
<evidence type="ECO:0000305" key="10"/>
<sequence length="954" mass="106856">MRIRGVKPFASAVGLLLGLLYAVDAAKVNKHKPWIETTYHGIVTENDDKVLLDPPLIALDKDAPLRYAGEICGFRIHGQNVPFEAVVLDKSTGEGVIRAKDKLDCELQKEHTFTIQAYDCGEGPDGGNMKKSHKATVHIQVNDVNEYSPVFKEKSYKATVIEGKKYDSIMKVEAVDADCSFQFSQICSYEIVTPDVPFTIDKDGNIKNTEKLNYGKERMYKLTVTAYDCGKNRASEDVLVKINIKPTCKPSWQGFNKRIEYEPGTGSLALFPSMHLETCEEPITSIQASIMLETNHIGKGCDRDTYSEKSLHKLCGASSGTVELLPAPSNSANWTVGLPTDNGHDSDQVFEFNGTQAIKVPEGVVSTTLKEPFTISVWMRHGPGGREKETILCNSDKTEMNRHHYSLYVHNCRLVLLLRQEPTESESYKPAEFHWKLDQVCDKEWHHYVLNIEFPAVTLFVDGGTFEPFLVTEDYPLHTSKIETQLTIGACWQGGSARMTQFFRGNLAGLMIRSGKLENKKVIDCLYTCKEGLDVQLPEEVASAVKVEFNPNQSSLSLEGDDIESFEKVMQHISYLNSRQFPTPGIRHLRVSTTVKCFNEETCISVPDSEGYVMVLQPEEPKISLSGIDHFARGAAEFESVEGVTLFPELRIVSTITREVEVEAEAETEAEGEDDPTVQETVVSEEIMHNLDTCEVTVVGEDLNGDHESLEVDLAQIQQRALEMSSSNVGMVITGVNTMANYEQVLHLIRYRNWHTEALFDRKFKLVCSELNGRYISNEFKVEVNVIHTANPMDHANNAMVQPQFISQVQHASVDLSGHNLVNTHQASVVPSAATIVIVVCVSFLVFMIILGVFRIRAAHQRTMRDQENGKENEMDWDDSALTITVNPMETYEDQHSSEEEGDEEEEESEDGEEEDDITSAESDSSEDEAGEQEDQQGSSRQQQLEWDDSTLTY</sequence>
<gene>
    <name evidence="9" type="primary">clstn1</name>
</gene>
<name>CSTN1_DANRE</name>
<organism>
    <name type="scientific">Danio rerio</name>
    <name type="common">Zebrafish</name>
    <name type="synonym">Brachydanio rerio</name>
    <dbReference type="NCBI Taxonomy" id="7955"/>
    <lineage>
        <taxon>Eukaryota</taxon>
        <taxon>Metazoa</taxon>
        <taxon>Chordata</taxon>
        <taxon>Craniata</taxon>
        <taxon>Vertebrata</taxon>
        <taxon>Euteleostomi</taxon>
        <taxon>Actinopterygii</taxon>
        <taxon>Neopterygii</taxon>
        <taxon>Teleostei</taxon>
        <taxon>Ostariophysi</taxon>
        <taxon>Cypriniformes</taxon>
        <taxon>Danionidae</taxon>
        <taxon>Danioninae</taxon>
        <taxon>Danio</taxon>
    </lineage>
</organism>
<keyword id="KW-0025">Alternative splicing</keyword>
<keyword id="KW-0106">Calcium</keyword>
<keyword id="KW-0130">Cell adhesion</keyword>
<keyword id="KW-1003">Cell membrane</keyword>
<keyword id="KW-0966">Cell projection</keyword>
<keyword id="KW-0256">Endoplasmic reticulum</keyword>
<keyword id="KW-0325">Glycoprotein</keyword>
<keyword id="KW-0333">Golgi apparatus</keyword>
<keyword id="KW-0472">Membrane</keyword>
<keyword id="KW-0628">Postsynaptic cell membrane</keyword>
<keyword id="KW-1185">Reference proteome</keyword>
<keyword id="KW-0677">Repeat</keyword>
<keyword id="KW-0732">Signal</keyword>
<keyword id="KW-0770">Synapse</keyword>
<keyword id="KW-0812">Transmembrane</keyword>
<keyword id="KW-1133">Transmembrane helix</keyword>
<protein>
    <recommendedName>
        <fullName evidence="9">Calsyntenin-1</fullName>
    </recommendedName>
</protein>
<dbReference type="EMBL" id="BX571850">
    <property type="status" value="NOT_ANNOTATED_CDS"/>
    <property type="molecule type" value="Genomic_DNA"/>
</dbReference>
<dbReference type="EMBL" id="CR391934">
    <property type="status" value="NOT_ANNOTATED_CDS"/>
    <property type="molecule type" value="Genomic_DNA"/>
</dbReference>
<dbReference type="EMBL" id="BC127396">
    <property type="protein sequence ID" value="AAI27397.1"/>
    <property type="molecule type" value="mRNA"/>
</dbReference>
<dbReference type="RefSeq" id="NP_001071252.2">
    <molecule id="F1R520-1"/>
    <property type="nucleotide sequence ID" value="NM_001077784.2"/>
</dbReference>
<dbReference type="RefSeq" id="XP_009295152.1">
    <molecule id="F1R520-2"/>
    <property type="nucleotide sequence ID" value="XM_009296877.4"/>
</dbReference>
<dbReference type="RefSeq" id="XP_009295153.1">
    <molecule id="F1R520-3"/>
    <property type="nucleotide sequence ID" value="XM_009296878.4"/>
</dbReference>
<dbReference type="SMR" id="F1R520"/>
<dbReference type="FunCoup" id="F1R520">
    <property type="interactions" value="1475"/>
</dbReference>
<dbReference type="STRING" id="7955.ENSDARP00000119688"/>
<dbReference type="PaxDb" id="7955-ENSDARP00000109493"/>
<dbReference type="Ensembl" id="ENSDART00000133902">
    <molecule id="F1R520-1"/>
    <property type="protein sequence ID" value="ENSDARP00000119688"/>
    <property type="gene ID" value="ENSDARG00000031720"/>
</dbReference>
<dbReference type="GeneID" id="777737"/>
<dbReference type="KEGG" id="dre:777737"/>
<dbReference type="AGR" id="ZFIN:ZDB-GENE-040426-1064"/>
<dbReference type="CTD" id="22883"/>
<dbReference type="ZFIN" id="ZDB-GENE-040426-1064">
    <property type="gene designation" value="clstn1"/>
</dbReference>
<dbReference type="eggNOG" id="KOG1834">
    <property type="taxonomic scope" value="Eukaryota"/>
</dbReference>
<dbReference type="HOGENOM" id="CLU_008904_0_0_1"/>
<dbReference type="OMA" id="CWQGSDN"/>
<dbReference type="OrthoDB" id="10012272at2759"/>
<dbReference type="TreeFam" id="TF315946"/>
<dbReference type="PRO" id="PR:F1R520"/>
<dbReference type="Proteomes" id="UP000000437">
    <property type="component" value="Chromosome 23"/>
</dbReference>
<dbReference type="Bgee" id="ENSDARG00000031720">
    <property type="expression patterns" value="Expressed in brain and 69 other cell types or tissues"/>
</dbReference>
<dbReference type="ExpressionAtlas" id="F1R520">
    <property type="expression patterns" value="baseline and differential"/>
</dbReference>
<dbReference type="GO" id="GO:0030424">
    <property type="term" value="C:axon"/>
    <property type="evidence" value="ECO:0007669"/>
    <property type="project" value="GOC"/>
</dbReference>
<dbReference type="GO" id="GO:0009986">
    <property type="term" value="C:cell surface"/>
    <property type="evidence" value="ECO:0000318"/>
    <property type="project" value="GO_Central"/>
</dbReference>
<dbReference type="GO" id="GO:0005789">
    <property type="term" value="C:endoplasmic reticulum membrane"/>
    <property type="evidence" value="ECO:0007669"/>
    <property type="project" value="UniProtKB-SubCell"/>
</dbReference>
<dbReference type="GO" id="GO:0000139">
    <property type="term" value="C:Golgi membrane"/>
    <property type="evidence" value="ECO:0007669"/>
    <property type="project" value="UniProtKB-SubCell"/>
</dbReference>
<dbReference type="GO" id="GO:0045211">
    <property type="term" value="C:postsynaptic membrane"/>
    <property type="evidence" value="ECO:0000318"/>
    <property type="project" value="GO_Central"/>
</dbReference>
<dbReference type="GO" id="GO:0005509">
    <property type="term" value="F:calcium ion binding"/>
    <property type="evidence" value="ECO:0007669"/>
    <property type="project" value="InterPro"/>
</dbReference>
<dbReference type="GO" id="GO:0140060">
    <property type="term" value="P:axon arborization"/>
    <property type="evidence" value="ECO:0000315"/>
    <property type="project" value="ZFIN"/>
</dbReference>
<dbReference type="GO" id="GO:0098930">
    <property type="term" value="P:axonal transport"/>
    <property type="evidence" value="ECO:0000315"/>
    <property type="project" value="ZFIN"/>
</dbReference>
<dbReference type="GO" id="GO:0032456">
    <property type="term" value="P:endocytic recycling"/>
    <property type="evidence" value="ECO:0000315"/>
    <property type="project" value="ZFIN"/>
</dbReference>
<dbReference type="GO" id="GO:0030951">
    <property type="term" value="P:establishment or maintenance of microtubule cytoskeleton polarity"/>
    <property type="evidence" value="ECO:0000315"/>
    <property type="project" value="ZFIN"/>
</dbReference>
<dbReference type="GO" id="GO:0007156">
    <property type="term" value="P:homophilic cell adhesion via plasma membrane adhesion molecules"/>
    <property type="evidence" value="ECO:0000314"/>
    <property type="project" value="ZFIN"/>
</dbReference>
<dbReference type="GO" id="GO:0051965">
    <property type="term" value="P:positive regulation of synapse assembly"/>
    <property type="evidence" value="ECO:0000318"/>
    <property type="project" value="GO_Central"/>
</dbReference>
<dbReference type="GO" id="GO:0050806">
    <property type="term" value="P:positive regulation of synaptic transmission"/>
    <property type="evidence" value="ECO:0000318"/>
    <property type="project" value="GO_Central"/>
</dbReference>
<dbReference type="GO" id="GO:0048670">
    <property type="term" value="P:regulation of collateral sprouting"/>
    <property type="evidence" value="ECO:0000315"/>
    <property type="project" value="ZFIN"/>
</dbReference>
<dbReference type="CDD" id="cd11304">
    <property type="entry name" value="Cadherin_repeat"/>
    <property type="match status" value="2"/>
</dbReference>
<dbReference type="FunFam" id="2.60.120.200:FF:000036">
    <property type="entry name" value="Calsyntenin 1"/>
    <property type="match status" value="1"/>
</dbReference>
<dbReference type="FunFam" id="2.60.40.60:FF:000025">
    <property type="entry name" value="Calsyntenin 1"/>
    <property type="match status" value="1"/>
</dbReference>
<dbReference type="FunFam" id="2.60.40.60:FF:000062">
    <property type="entry name" value="Calsyntenin 3"/>
    <property type="match status" value="1"/>
</dbReference>
<dbReference type="Gene3D" id="2.60.120.200">
    <property type="match status" value="1"/>
</dbReference>
<dbReference type="Gene3D" id="2.60.40.60">
    <property type="entry name" value="Cadherins"/>
    <property type="match status" value="2"/>
</dbReference>
<dbReference type="InterPro" id="IPR002126">
    <property type="entry name" value="Cadherin-like_dom"/>
</dbReference>
<dbReference type="InterPro" id="IPR015919">
    <property type="entry name" value="Cadherin-like_sf"/>
</dbReference>
<dbReference type="InterPro" id="IPR045588">
    <property type="entry name" value="CLSTN_C"/>
</dbReference>
<dbReference type="InterPro" id="IPR013320">
    <property type="entry name" value="ConA-like_dom_sf"/>
</dbReference>
<dbReference type="PANTHER" id="PTHR14139">
    <property type="entry name" value="CALSYNTENIN"/>
    <property type="match status" value="1"/>
</dbReference>
<dbReference type="PANTHER" id="PTHR14139:SF4">
    <property type="entry name" value="CALSYNTENIN-1"/>
    <property type="match status" value="1"/>
</dbReference>
<dbReference type="Pfam" id="PF00028">
    <property type="entry name" value="Cadherin"/>
    <property type="match status" value="1"/>
</dbReference>
<dbReference type="Pfam" id="PF19699">
    <property type="entry name" value="CLSTN_C"/>
    <property type="match status" value="1"/>
</dbReference>
<dbReference type="PRINTS" id="PR00205">
    <property type="entry name" value="CADHERIN"/>
</dbReference>
<dbReference type="SMART" id="SM00112">
    <property type="entry name" value="CA"/>
    <property type="match status" value="2"/>
</dbReference>
<dbReference type="SUPFAM" id="SSF49313">
    <property type="entry name" value="Cadherin-like"/>
    <property type="match status" value="2"/>
</dbReference>
<dbReference type="SUPFAM" id="SSF49899">
    <property type="entry name" value="Concanavalin A-like lectins/glucanases"/>
    <property type="match status" value="1"/>
</dbReference>
<dbReference type="PROSITE" id="PS50268">
    <property type="entry name" value="CADHERIN_2"/>
    <property type="match status" value="2"/>
</dbReference>
<comment type="function">
    <text evidence="1 7 8">Postsynaptic adhesion molecule involved in vesicle trafficking; required for branching of peripheral but not central axons of sensory neurons (PubMed:25009257, PubMed:25463516). Promotes synapse development by acting as a cell adhesion molecule at the postsynaptic membrane, which associates with presynaptic neurexins (By similarity).</text>
</comment>
<comment type="subunit">
    <text evidence="8">Homooligomer and heterooligomer; mediates both homophilic and heterophilc interactions with clstn2 and clstn3 paralogs via cadherin domains.</text>
</comment>
<comment type="subcellular location">
    <subcellularLocation>
        <location evidence="2">Postsynaptic cell membrane</location>
        <topology evidence="2">Single-pass type I membrane protein</topology>
    </subcellularLocation>
    <subcellularLocation>
        <location evidence="2">Endoplasmic reticulum membrane</location>
        <topology evidence="2">Single-pass type I membrane protein</topology>
    </subcellularLocation>
    <subcellularLocation>
        <location evidence="2">Golgi apparatus membrane</location>
        <topology evidence="3">Single-pass type I membrane protein</topology>
    </subcellularLocation>
    <subcellularLocation>
        <location evidence="2">Cell projection</location>
        <location evidence="2">Neuron projection</location>
    </subcellularLocation>
    <text evidence="2">Localized in the postsynaptic membrane of both excitatory and inhibitory synapses.</text>
</comment>
<comment type="alternative products">
    <event type="alternative splicing"/>
    <isoform>
        <id>F1R520-1</id>
        <name>1</name>
        <sequence type="displayed"/>
    </isoform>
    <isoform>
        <id>F1R520-2</id>
        <name>2</name>
        <sequence type="described" ref="VSP_061885"/>
    </isoform>
    <isoform>
        <id>F1R520-3</id>
        <name>3</name>
        <sequence type="described" ref="VSP_061884"/>
    </isoform>
</comment>
<comment type="tissue specificity">
    <text evidence="8">By 48 hours post-fertilization (hpf), widely expressed in the brain, with strong expression in the telencephalon and the midbrain.</text>
</comment>
<comment type="developmental stage">
    <text evidence="7 8">Expressed in the developing central nervous system and in sensory neurons (PubMed:25009257). Expression is detected at 4.5 hours post-fertilization (hpf) (PubMed:25463516). During development, strongly expressed in the forebrain, midbrain and hindbrain during brain development (PubMed:25463516). Compared to clstn3, expression appears broader in the telencephalon and extends more dorsally in the midbrain (PubMed:25463516). Broadly expressed in the spinal cord (PubMed:25463516).</text>
</comment>
<comment type="similarity">
    <text evidence="10">Belongs to the calsyntenin family.</text>
</comment>